<keyword id="KW-1185">Reference proteome</keyword>
<keyword id="KW-0687">Ribonucleoprotein</keyword>
<keyword id="KW-0689">Ribosomal protein</keyword>
<keyword id="KW-0694">RNA-binding</keyword>
<keyword id="KW-0699">rRNA-binding</keyword>
<evidence type="ECO:0000255" key="1">
    <source>
        <dbReference type="HAMAP-Rule" id="MF_01320"/>
    </source>
</evidence>
<evidence type="ECO:0000256" key="2">
    <source>
        <dbReference type="SAM" id="MobiDB-lite"/>
    </source>
</evidence>
<evidence type="ECO:0000305" key="3"/>
<sequence length="273" mass="29918">MAIVKCKPTSPGRRHVVKVVTPELHKGKPFAGLLEEKRKTGGRNNNGRITTRHIGGGHKQHYRLIDFKRNKDGIPAKIERLEYDPNRSANIALVLYADGERRYILAPKNLKAGDPIVSGVDAPIKAGNALPMRNIPVGTTVHAVEMKPGKGAQIARSAGASVQILAREGAYVTLRLRSGEVRKVLAECRATVGEVGNAEHMLRQLGKAGANRWRGIRPTVRGMAMNPVDHPHGGGEGRNKGIQPVSPWGTPAKGYRTRSNKRTDKYIVRRRNK</sequence>
<gene>
    <name evidence="1" type="primary">rplB</name>
    <name type="ordered locus">Tola_0102</name>
</gene>
<accession>C4L7T3</accession>
<comment type="function">
    <text evidence="1">One of the primary rRNA binding proteins. Required for association of the 30S and 50S subunits to form the 70S ribosome, for tRNA binding and peptide bond formation. It has been suggested to have peptidyltransferase activity; this is somewhat controversial. Makes several contacts with the 16S rRNA in the 70S ribosome.</text>
</comment>
<comment type="subunit">
    <text evidence="1">Part of the 50S ribosomal subunit. Forms a bridge to the 30S subunit in the 70S ribosome.</text>
</comment>
<comment type="similarity">
    <text evidence="1">Belongs to the universal ribosomal protein uL2 family.</text>
</comment>
<name>RL2_TOLAT</name>
<protein>
    <recommendedName>
        <fullName evidence="1">Large ribosomal subunit protein uL2</fullName>
    </recommendedName>
    <alternativeName>
        <fullName evidence="3">50S ribosomal protein L2</fullName>
    </alternativeName>
</protein>
<reference key="1">
    <citation type="submission" date="2009-05" db="EMBL/GenBank/DDBJ databases">
        <title>Complete sequence of Tolumonas auensis DSM 9187.</title>
        <authorList>
            <consortium name="US DOE Joint Genome Institute"/>
            <person name="Lucas S."/>
            <person name="Copeland A."/>
            <person name="Lapidus A."/>
            <person name="Glavina del Rio T."/>
            <person name="Tice H."/>
            <person name="Bruce D."/>
            <person name="Goodwin L."/>
            <person name="Pitluck S."/>
            <person name="Chertkov O."/>
            <person name="Brettin T."/>
            <person name="Detter J.C."/>
            <person name="Han C."/>
            <person name="Larimer F."/>
            <person name="Land M."/>
            <person name="Hauser L."/>
            <person name="Kyrpides N."/>
            <person name="Mikhailova N."/>
            <person name="Spring S."/>
            <person name="Beller H."/>
        </authorList>
    </citation>
    <scope>NUCLEOTIDE SEQUENCE [LARGE SCALE GENOMIC DNA]</scope>
    <source>
        <strain>DSM 9187 / NBRC 110442 / TA 4</strain>
    </source>
</reference>
<dbReference type="EMBL" id="CP001616">
    <property type="protein sequence ID" value="ACQ91732.1"/>
    <property type="molecule type" value="Genomic_DNA"/>
</dbReference>
<dbReference type="RefSeq" id="WP_012728331.1">
    <property type="nucleotide sequence ID" value="NC_012691.1"/>
</dbReference>
<dbReference type="SMR" id="C4L7T3"/>
<dbReference type="STRING" id="595494.Tola_0102"/>
<dbReference type="KEGG" id="tau:Tola_0102"/>
<dbReference type="eggNOG" id="COG0090">
    <property type="taxonomic scope" value="Bacteria"/>
</dbReference>
<dbReference type="HOGENOM" id="CLU_036235_2_1_6"/>
<dbReference type="OrthoDB" id="9778722at2"/>
<dbReference type="Proteomes" id="UP000009073">
    <property type="component" value="Chromosome"/>
</dbReference>
<dbReference type="GO" id="GO:0015934">
    <property type="term" value="C:large ribosomal subunit"/>
    <property type="evidence" value="ECO:0007669"/>
    <property type="project" value="InterPro"/>
</dbReference>
<dbReference type="GO" id="GO:0019843">
    <property type="term" value="F:rRNA binding"/>
    <property type="evidence" value="ECO:0007669"/>
    <property type="project" value="UniProtKB-UniRule"/>
</dbReference>
<dbReference type="GO" id="GO:0003735">
    <property type="term" value="F:structural constituent of ribosome"/>
    <property type="evidence" value="ECO:0007669"/>
    <property type="project" value="InterPro"/>
</dbReference>
<dbReference type="GO" id="GO:0016740">
    <property type="term" value="F:transferase activity"/>
    <property type="evidence" value="ECO:0007669"/>
    <property type="project" value="InterPro"/>
</dbReference>
<dbReference type="GO" id="GO:0002181">
    <property type="term" value="P:cytoplasmic translation"/>
    <property type="evidence" value="ECO:0007669"/>
    <property type="project" value="TreeGrafter"/>
</dbReference>
<dbReference type="FunFam" id="2.30.30.30:FF:000001">
    <property type="entry name" value="50S ribosomal protein L2"/>
    <property type="match status" value="1"/>
</dbReference>
<dbReference type="FunFam" id="2.40.50.140:FF:000003">
    <property type="entry name" value="50S ribosomal protein L2"/>
    <property type="match status" value="1"/>
</dbReference>
<dbReference type="FunFam" id="4.10.950.10:FF:000001">
    <property type="entry name" value="50S ribosomal protein L2"/>
    <property type="match status" value="1"/>
</dbReference>
<dbReference type="Gene3D" id="2.30.30.30">
    <property type="match status" value="1"/>
</dbReference>
<dbReference type="Gene3D" id="2.40.50.140">
    <property type="entry name" value="Nucleic acid-binding proteins"/>
    <property type="match status" value="1"/>
</dbReference>
<dbReference type="Gene3D" id="4.10.950.10">
    <property type="entry name" value="Ribosomal protein L2, domain 3"/>
    <property type="match status" value="1"/>
</dbReference>
<dbReference type="HAMAP" id="MF_01320_B">
    <property type="entry name" value="Ribosomal_uL2_B"/>
    <property type="match status" value="1"/>
</dbReference>
<dbReference type="InterPro" id="IPR012340">
    <property type="entry name" value="NA-bd_OB-fold"/>
</dbReference>
<dbReference type="InterPro" id="IPR014722">
    <property type="entry name" value="Rib_uL2_dom2"/>
</dbReference>
<dbReference type="InterPro" id="IPR002171">
    <property type="entry name" value="Ribosomal_uL2"/>
</dbReference>
<dbReference type="InterPro" id="IPR005880">
    <property type="entry name" value="Ribosomal_uL2_bac/org-type"/>
</dbReference>
<dbReference type="InterPro" id="IPR022669">
    <property type="entry name" value="Ribosomal_uL2_C"/>
</dbReference>
<dbReference type="InterPro" id="IPR014726">
    <property type="entry name" value="Ribosomal_uL2_dom3"/>
</dbReference>
<dbReference type="InterPro" id="IPR022666">
    <property type="entry name" value="Ribosomal_uL2_RNA-bd_dom"/>
</dbReference>
<dbReference type="InterPro" id="IPR008991">
    <property type="entry name" value="Translation_prot_SH3-like_sf"/>
</dbReference>
<dbReference type="NCBIfam" id="TIGR01171">
    <property type="entry name" value="rplB_bact"/>
    <property type="match status" value="1"/>
</dbReference>
<dbReference type="PANTHER" id="PTHR13691:SF5">
    <property type="entry name" value="LARGE RIBOSOMAL SUBUNIT PROTEIN UL2M"/>
    <property type="match status" value="1"/>
</dbReference>
<dbReference type="PANTHER" id="PTHR13691">
    <property type="entry name" value="RIBOSOMAL PROTEIN L2"/>
    <property type="match status" value="1"/>
</dbReference>
<dbReference type="Pfam" id="PF00181">
    <property type="entry name" value="Ribosomal_L2"/>
    <property type="match status" value="1"/>
</dbReference>
<dbReference type="Pfam" id="PF03947">
    <property type="entry name" value="Ribosomal_L2_C"/>
    <property type="match status" value="1"/>
</dbReference>
<dbReference type="PIRSF" id="PIRSF002158">
    <property type="entry name" value="Ribosomal_L2"/>
    <property type="match status" value="1"/>
</dbReference>
<dbReference type="SMART" id="SM01383">
    <property type="entry name" value="Ribosomal_L2"/>
    <property type="match status" value="1"/>
</dbReference>
<dbReference type="SMART" id="SM01382">
    <property type="entry name" value="Ribosomal_L2_C"/>
    <property type="match status" value="1"/>
</dbReference>
<dbReference type="SUPFAM" id="SSF50249">
    <property type="entry name" value="Nucleic acid-binding proteins"/>
    <property type="match status" value="1"/>
</dbReference>
<dbReference type="SUPFAM" id="SSF50104">
    <property type="entry name" value="Translation proteins SH3-like domain"/>
    <property type="match status" value="1"/>
</dbReference>
<feature type="chain" id="PRO_1000214468" description="Large ribosomal subunit protein uL2">
    <location>
        <begin position="1"/>
        <end position="273"/>
    </location>
</feature>
<feature type="region of interest" description="Disordered" evidence="2">
    <location>
        <begin position="222"/>
        <end position="273"/>
    </location>
</feature>
<feature type="compositionally biased region" description="Basic and acidic residues" evidence="2">
    <location>
        <begin position="229"/>
        <end position="239"/>
    </location>
</feature>
<organism>
    <name type="scientific">Tolumonas auensis (strain DSM 9187 / NBRC 110442 / TA 4)</name>
    <dbReference type="NCBI Taxonomy" id="595494"/>
    <lineage>
        <taxon>Bacteria</taxon>
        <taxon>Pseudomonadati</taxon>
        <taxon>Pseudomonadota</taxon>
        <taxon>Gammaproteobacteria</taxon>
        <taxon>Aeromonadales</taxon>
        <taxon>Aeromonadaceae</taxon>
        <taxon>Tolumonas</taxon>
    </lineage>
</organism>
<proteinExistence type="inferred from homology"/>